<sequence>MSRTVMCRKYHEELPGLDRPPYPGAKGEDIYNNVSRKAWDEWQKHQTMLINERRLNMMNAEDRKFLQQEMDKFLSGEDYAKADGYVPPSA</sequence>
<proteinExistence type="inferred from homology"/>
<name>FETP_PSEAB</name>
<organism>
    <name type="scientific">Pseudomonas aeruginosa (strain UCBPP-PA14)</name>
    <dbReference type="NCBI Taxonomy" id="208963"/>
    <lineage>
        <taxon>Bacteria</taxon>
        <taxon>Pseudomonadati</taxon>
        <taxon>Pseudomonadota</taxon>
        <taxon>Gammaproteobacteria</taxon>
        <taxon>Pseudomonadales</taxon>
        <taxon>Pseudomonadaceae</taxon>
        <taxon>Pseudomonas</taxon>
    </lineage>
</organism>
<accession>Q02EL6</accession>
<dbReference type="EMBL" id="CP000438">
    <property type="protein sequence ID" value="ABJ14532.1"/>
    <property type="molecule type" value="Genomic_DNA"/>
</dbReference>
<dbReference type="RefSeq" id="WP_003096100.1">
    <property type="nucleotide sequence ID" value="NZ_CP034244.1"/>
</dbReference>
<dbReference type="SMR" id="Q02EL6"/>
<dbReference type="KEGG" id="pau:PA14_68000"/>
<dbReference type="PseudoCAP" id="PA14_68000"/>
<dbReference type="HOGENOM" id="CLU_170994_0_0_6"/>
<dbReference type="BioCyc" id="PAER208963:G1G74-5733-MONOMER"/>
<dbReference type="Proteomes" id="UP000000653">
    <property type="component" value="Chromosome"/>
</dbReference>
<dbReference type="GO" id="GO:0005829">
    <property type="term" value="C:cytosol"/>
    <property type="evidence" value="ECO:0007669"/>
    <property type="project" value="TreeGrafter"/>
</dbReference>
<dbReference type="GO" id="GO:0005506">
    <property type="term" value="F:iron ion binding"/>
    <property type="evidence" value="ECO:0007669"/>
    <property type="project" value="UniProtKB-UniRule"/>
</dbReference>
<dbReference type="GO" id="GO:0034599">
    <property type="term" value="P:cellular response to oxidative stress"/>
    <property type="evidence" value="ECO:0007669"/>
    <property type="project" value="TreeGrafter"/>
</dbReference>
<dbReference type="FunFam" id="1.10.3880.10:FF:000001">
    <property type="entry name" value="Probable Fe(2+)-trafficking protein"/>
    <property type="match status" value="1"/>
</dbReference>
<dbReference type="Gene3D" id="1.10.3880.10">
    <property type="entry name" value="Fe(II) trafficking protein YggX"/>
    <property type="match status" value="1"/>
</dbReference>
<dbReference type="HAMAP" id="MF_00686">
    <property type="entry name" value="Fe_traffic_YggX"/>
    <property type="match status" value="1"/>
</dbReference>
<dbReference type="InterPro" id="IPR007457">
    <property type="entry name" value="Fe_traffick_prot_YggX"/>
</dbReference>
<dbReference type="InterPro" id="IPR036766">
    <property type="entry name" value="Fe_traffick_prot_YggX_sf"/>
</dbReference>
<dbReference type="NCBIfam" id="NF003817">
    <property type="entry name" value="PRK05408.1"/>
    <property type="match status" value="1"/>
</dbReference>
<dbReference type="PANTHER" id="PTHR36965">
    <property type="entry name" value="FE(2+)-TRAFFICKING PROTEIN-RELATED"/>
    <property type="match status" value="1"/>
</dbReference>
<dbReference type="PANTHER" id="PTHR36965:SF1">
    <property type="entry name" value="FE(2+)-TRAFFICKING PROTEIN-RELATED"/>
    <property type="match status" value="1"/>
</dbReference>
<dbReference type="Pfam" id="PF04362">
    <property type="entry name" value="Iron_traffic"/>
    <property type="match status" value="1"/>
</dbReference>
<dbReference type="PIRSF" id="PIRSF029827">
    <property type="entry name" value="Fe_traffic_YggX"/>
    <property type="match status" value="1"/>
</dbReference>
<dbReference type="SUPFAM" id="SSF111148">
    <property type="entry name" value="YggX-like"/>
    <property type="match status" value="1"/>
</dbReference>
<keyword id="KW-0408">Iron</keyword>
<gene>
    <name type="ordered locus">PA14_68000</name>
</gene>
<protein>
    <recommendedName>
        <fullName evidence="1">Probable Fe(2+)-trafficking protein</fullName>
    </recommendedName>
</protein>
<feature type="chain" id="PRO_1000045053" description="Probable Fe(2+)-trafficking protein">
    <location>
        <begin position="1"/>
        <end position="90"/>
    </location>
</feature>
<comment type="function">
    <text evidence="1">Could be a mediator in iron transactions between iron acquisition and iron-requiring processes, such as synthesis and/or repair of Fe-S clusters in biosynthetic enzymes.</text>
</comment>
<comment type="similarity">
    <text evidence="1">Belongs to the Fe(2+)-trafficking protein family.</text>
</comment>
<evidence type="ECO:0000255" key="1">
    <source>
        <dbReference type="HAMAP-Rule" id="MF_00686"/>
    </source>
</evidence>
<reference key="1">
    <citation type="journal article" date="2006" name="Genome Biol.">
        <title>Genomic analysis reveals that Pseudomonas aeruginosa virulence is combinatorial.</title>
        <authorList>
            <person name="Lee D.G."/>
            <person name="Urbach J.M."/>
            <person name="Wu G."/>
            <person name="Liberati N.T."/>
            <person name="Feinbaum R.L."/>
            <person name="Miyata S."/>
            <person name="Diggins L.T."/>
            <person name="He J."/>
            <person name="Saucier M."/>
            <person name="Deziel E."/>
            <person name="Friedman L."/>
            <person name="Li L."/>
            <person name="Grills G."/>
            <person name="Montgomery K."/>
            <person name="Kucherlapati R."/>
            <person name="Rahme L.G."/>
            <person name="Ausubel F.M."/>
        </authorList>
    </citation>
    <scope>NUCLEOTIDE SEQUENCE [LARGE SCALE GENOMIC DNA]</scope>
    <source>
        <strain>UCBPP-PA14</strain>
    </source>
</reference>